<protein>
    <recommendedName>
        <fullName>Neutral protease 2 homolog MEP3</fullName>
        <ecNumber>3.4.24.39</ecNumber>
    </recommendedName>
    <alternativeName>
        <fullName>Deuterolysin MEP3</fullName>
    </alternativeName>
    <alternativeName>
        <fullName>Metalloproteinase 3</fullName>
    </alternativeName>
</protein>
<proteinExistence type="inferred from homology"/>
<sequence length="354" mass="37918">MHFTSSLLALVALTTQALAFPLNDLPKRDSGLAVKLSSIGNTRVKAVITNTADHEISFLKFNTFFDSSATRKVSIAKDGSVVPFNGLYRYYNAAKLPKEAFKTLAPGASAEATFDIAETSDLSAGGSFSVFSDGMIPVADGSGTTLTGAIKYSTNELKMNVDGALAAKVQSAIPKLEKRTRIDPDCPGEYRNVLTQGLQTAAGYASRAAEAATNGDQLEEFFKTTDQQTAQNIAQRFQAIAQECGSDSQGSTTYFCDDRFNGCEQGVIAYTIPAQSVVVNCPAYWELPPVVNQGLDPDHGYVVVHEFTHATSIFSPGTQDHAYGYENCIRLSPEQCISNADNYSLYAASVSRGG</sequence>
<reference key="1">
    <citation type="journal article" date="2005" name="Infect. Immun.">
        <title>A metalloproteinase of Coccidioides posadasii contributes to evasion of host detection.</title>
        <authorList>
            <person name="Hung C.Y."/>
            <person name="Seshan K.R."/>
            <person name="Yu J.J."/>
            <person name="Schaller R."/>
            <person name="Xue J."/>
            <person name="Basrur V."/>
            <person name="Gardner M.J."/>
            <person name="Cole G.T."/>
        </authorList>
    </citation>
    <scope>NUCLEOTIDE SEQUENCE [GENOMIC DNA]</scope>
    <source>
        <strain>C735</strain>
    </source>
</reference>
<reference key="2">
    <citation type="journal article" date="2009" name="Genome Res.">
        <title>Comparative genomic analyses of the human fungal pathogens Coccidioides and their relatives.</title>
        <authorList>
            <person name="Sharpton T.J."/>
            <person name="Stajich J.E."/>
            <person name="Rounsley S.D."/>
            <person name="Gardner M.J."/>
            <person name="Wortman J.R."/>
            <person name="Jordar V.S."/>
            <person name="Maiti R."/>
            <person name="Kodira C.D."/>
            <person name="Neafsey D.E."/>
            <person name="Zeng Q."/>
            <person name="Hung C.-Y."/>
            <person name="McMahan C."/>
            <person name="Muszewska A."/>
            <person name="Grynberg M."/>
            <person name="Mandel M.A."/>
            <person name="Kellner E.M."/>
            <person name="Barker B.M."/>
            <person name="Galgiani J.N."/>
            <person name="Orbach M.J."/>
            <person name="Kirkland T.N."/>
            <person name="Cole G.T."/>
            <person name="Henn M.R."/>
            <person name="Birren B.W."/>
            <person name="Taylor J.W."/>
        </authorList>
    </citation>
    <scope>NUCLEOTIDE SEQUENCE [LARGE SCALE GENOMIC DNA]</scope>
    <source>
        <strain>C735</strain>
    </source>
</reference>
<evidence type="ECO:0000250" key="1"/>
<evidence type="ECO:0000255" key="2"/>
<evidence type="ECO:0000305" key="3"/>
<gene>
    <name type="primary">MEP3</name>
    <name type="ORF">CPC735_031330</name>
</gene>
<organism>
    <name type="scientific">Coccidioides posadasii (strain C735)</name>
    <name type="common">Valley fever fungus</name>
    <dbReference type="NCBI Taxonomy" id="222929"/>
    <lineage>
        <taxon>Eukaryota</taxon>
        <taxon>Fungi</taxon>
        <taxon>Dikarya</taxon>
        <taxon>Ascomycota</taxon>
        <taxon>Pezizomycotina</taxon>
        <taxon>Eurotiomycetes</taxon>
        <taxon>Eurotiomycetidae</taxon>
        <taxon>Onygenales</taxon>
        <taxon>Onygenaceae</taxon>
        <taxon>Coccidioides</taxon>
    </lineage>
</organism>
<keyword id="KW-0165">Cleavage on pair of basic residues</keyword>
<keyword id="KW-1015">Disulfide bond</keyword>
<keyword id="KW-0378">Hydrolase</keyword>
<keyword id="KW-0479">Metal-binding</keyword>
<keyword id="KW-0482">Metalloprotease</keyword>
<keyword id="KW-0645">Protease</keyword>
<keyword id="KW-0964">Secreted</keyword>
<keyword id="KW-0732">Signal</keyword>
<keyword id="KW-0843">Virulence</keyword>
<keyword id="KW-0862">Zinc</keyword>
<keyword id="KW-0865">Zymogen</keyword>
<dbReference type="EC" id="3.4.24.39"/>
<dbReference type="EMBL" id="AY987807">
    <property type="protein sequence ID" value="AAY45753.1"/>
    <property type="status" value="ALT_SEQ"/>
    <property type="molecule type" value="Genomic_DNA"/>
</dbReference>
<dbReference type="EMBL" id="ACFW01000025">
    <property type="protein sequence ID" value="EER27797.1"/>
    <property type="molecule type" value="Genomic_DNA"/>
</dbReference>
<dbReference type="RefSeq" id="XP_003069942.1">
    <property type="nucleotide sequence ID" value="XM_003069896.1"/>
</dbReference>
<dbReference type="SMR" id="C5P507"/>
<dbReference type="GeneID" id="9695437"/>
<dbReference type="KEGG" id="cpw:9695437"/>
<dbReference type="VEuPathDB" id="FungiDB:CPC735_031330"/>
<dbReference type="HOGENOM" id="CLU_039313_1_1_1"/>
<dbReference type="OrthoDB" id="412874at2759"/>
<dbReference type="BRENDA" id="3.4.24.39">
    <property type="organism ID" value="9184"/>
</dbReference>
<dbReference type="Proteomes" id="UP000009084">
    <property type="component" value="Unassembled WGS sequence"/>
</dbReference>
<dbReference type="GO" id="GO:0005576">
    <property type="term" value="C:extracellular region"/>
    <property type="evidence" value="ECO:0007669"/>
    <property type="project" value="UniProtKB-SubCell"/>
</dbReference>
<dbReference type="GO" id="GO:0046872">
    <property type="term" value="F:metal ion binding"/>
    <property type="evidence" value="ECO:0007669"/>
    <property type="project" value="UniProtKB-KW"/>
</dbReference>
<dbReference type="GO" id="GO:0004222">
    <property type="term" value="F:metalloendopeptidase activity"/>
    <property type="evidence" value="ECO:0007669"/>
    <property type="project" value="InterPro"/>
</dbReference>
<dbReference type="GO" id="GO:0006508">
    <property type="term" value="P:proteolysis"/>
    <property type="evidence" value="ECO:0007669"/>
    <property type="project" value="UniProtKB-KW"/>
</dbReference>
<dbReference type="CDD" id="cd11008">
    <property type="entry name" value="M35_deuterolysin_like"/>
    <property type="match status" value="1"/>
</dbReference>
<dbReference type="Gene3D" id="2.60.40.2970">
    <property type="match status" value="1"/>
</dbReference>
<dbReference type="Gene3D" id="3.40.390.10">
    <property type="entry name" value="Collagenase (Catalytic Domain)"/>
    <property type="match status" value="1"/>
</dbReference>
<dbReference type="InterPro" id="IPR050414">
    <property type="entry name" value="Fungal_M35_metalloproteases"/>
</dbReference>
<dbReference type="InterPro" id="IPR029463">
    <property type="entry name" value="Lys_MEP"/>
</dbReference>
<dbReference type="InterPro" id="IPR024079">
    <property type="entry name" value="MetalloPept_cat_dom_sf"/>
</dbReference>
<dbReference type="InterPro" id="IPR001384">
    <property type="entry name" value="Peptidase_M35"/>
</dbReference>
<dbReference type="PANTHER" id="PTHR37016">
    <property type="match status" value="1"/>
</dbReference>
<dbReference type="PANTHER" id="PTHR37016:SF3">
    <property type="entry name" value="NEUTRAL PROTEASE 2-RELATED"/>
    <property type="match status" value="1"/>
</dbReference>
<dbReference type="Pfam" id="PF02102">
    <property type="entry name" value="Peptidase_M35"/>
    <property type="match status" value="1"/>
</dbReference>
<dbReference type="PRINTS" id="PR00768">
    <property type="entry name" value="DEUTEROLYSIN"/>
</dbReference>
<dbReference type="SMART" id="SM01351">
    <property type="entry name" value="Aspzincin_M35"/>
    <property type="match status" value="1"/>
</dbReference>
<dbReference type="SUPFAM" id="SSF55486">
    <property type="entry name" value="Metalloproteases ('zincins'), catalytic domain"/>
    <property type="match status" value="1"/>
</dbReference>
<feature type="signal peptide" evidence="2">
    <location>
        <begin position="1"/>
        <end position="19"/>
    </location>
</feature>
<feature type="propeptide" id="PRO_0000407068" evidence="1">
    <location>
        <begin position="20"/>
        <end position="179"/>
    </location>
</feature>
<feature type="chain" id="PRO_0000407069" description="Neutral protease 2 homolog MEP3">
    <location>
        <begin position="180"/>
        <end position="354"/>
    </location>
</feature>
<feature type="active site" evidence="1">
    <location>
        <position position="306"/>
    </location>
</feature>
<feature type="binding site" evidence="1">
    <location>
        <position position="305"/>
    </location>
    <ligand>
        <name>Zn(2+)</name>
        <dbReference type="ChEBI" id="CHEBI:29105"/>
        <note>catalytic</note>
    </ligand>
</feature>
<feature type="binding site" evidence="1">
    <location>
        <position position="309"/>
    </location>
    <ligand>
        <name>Zn(2+)</name>
        <dbReference type="ChEBI" id="CHEBI:29105"/>
        <note>catalytic</note>
    </ligand>
</feature>
<feature type="binding site" evidence="1">
    <location>
        <position position="320"/>
    </location>
    <ligand>
        <name>Zn(2+)</name>
        <dbReference type="ChEBI" id="CHEBI:29105"/>
        <note>catalytic</note>
    </ligand>
</feature>
<feature type="disulfide bond" evidence="1">
    <location>
        <begin position="186"/>
        <end position="256"/>
    </location>
</feature>
<feature type="disulfide bond" evidence="1">
    <location>
        <begin position="263"/>
        <end position="281"/>
    </location>
</feature>
<name>MEP3_COCP7</name>
<comment type="function">
    <text evidence="1">Secreted metalloproteinase that allows assimilation of proteinaceous substrates. Shows high activities on basic nuclear substrates such as histone and protamine. May be involved in virulence (By similarity).</text>
</comment>
<comment type="catalytic activity">
    <reaction>
        <text>Preferential cleavage of bonds with hydrophobic residues in P1'. Also 3-Asn-|-Gln-4 and 8-Gly-|-Ser-9 bonds in insulin B chain.</text>
        <dbReference type="EC" id="3.4.24.39"/>
    </reaction>
</comment>
<comment type="cofactor">
    <cofactor evidence="1">
        <name>Zn(2+)</name>
        <dbReference type="ChEBI" id="CHEBI:29105"/>
    </cofactor>
    <text evidence="1">Binds 1 zinc ion per subunit.</text>
</comment>
<comment type="subcellular location">
    <subcellularLocation>
        <location evidence="1">Secreted</location>
    </subcellularLocation>
</comment>
<comment type="similarity">
    <text evidence="3">Belongs to the peptidase M35 family.</text>
</comment>
<comment type="sequence caution" evidence="3">
    <conflict type="erroneous gene model prediction">
        <sequence resource="EMBL-CDS" id="AAY45753"/>
    </conflict>
</comment>
<accession>C5P507</accession>
<accession>Q3KRR0</accession>